<feature type="signal peptide" evidence="1">
    <location>
        <begin position="1"/>
        <end position="22"/>
    </location>
</feature>
<feature type="chain" id="PRO_0000282082" description="Uncharacterized lipoprotein SAUSA300_0417">
    <location>
        <begin position="23"/>
        <end position="270"/>
    </location>
</feature>
<feature type="lipid moiety-binding region" description="N-palmitoyl cysteine" evidence="1">
    <location>
        <position position="23"/>
    </location>
</feature>
<feature type="lipid moiety-binding region" description="S-diacylglycerol cysteine" evidence="1">
    <location>
        <position position="23"/>
    </location>
</feature>
<reference key="1">
    <citation type="journal article" date="2006" name="Lancet">
        <title>Complete genome sequence of USA300, an epidemic clone of community-acquired meticillin-resistant Staphylococcus aureus.</title>
        <authorList>
            <person name="Diep B.A."/>
            <person name="Gill S.R."/>
            <person name="Chang R.F."/>
            <person name="Phan T.H."/>
            <person name="Chen J.H."/>
            <person name="Davidson M.G."/>
            <person name="Lin F."/>
            <person name="Lin J."/>
            <person name="Carleton H.A."/>
            <person name="Mongodin E.F."/>
            <person name="Sensabaugh G.F."/>
            <person name="Perdreau-Remington F."/>
        </authorList>
    </citation>
    <scope>NUCLEOTIDE SEQUENCE [LARGE SCALE GENOMIC DNA]</scope>
    <source>
        <strain>USA300</strain>
    </source>
</reference>
<sequence length="270" mass="31500">MGYIKRMALYMSVFLLIIFIVGCRNMKDEQKKEEQTNKTDSKEEQIKKSFEKTLDMYPIKNLEELYDKEGYRDGEFKKGDKGMWTIYTDFAKSNKQGGLSNEGMVLYLDRNTRTAKGHYFVKTFYNKGKFPDRKNYKVEMKNNKIILLDKVEDTNLKKRIENFKFFGQYANLKELKNYNNGDVSINENVPSYDAKFKMSNKDENVKQLRSRYNIPTDKAPVLKMHIDGNLKGSSVGYKKLEIDFSKGGKSDLSVIDSLNFQPAKVDEDDE</sequence>
<proteinExistence type="inferred from homology"/>
<organism>
    <name type="scientific">Staphylococcus aureus (strain USA300)</name>
    <dbReference type="NCBI Taxonomy" id="367830"/>
    <lineage>
        <taxon>Bacteria</taxon>
        <taxon>Bacillati</taxon>
        <taxon>Bacillota</taxon>
        <taxon>Bacilli</taxon>
        <taxon>Bacillales</taxon>
        <taxon>Staphylococcaceae</taxon>
        <taxon>Staphylococcus</taxon>
    </lineage>
</organism>
<comment type="subcellular location">
    <subcellularLocation>
        <location evidence="1">Cell membrane</location>
        <topology evidence="1">Lipid-anchor</topology>
    </subcellularLocation>
</comment>
<comment type="similarity">
    <text evidence="2">Belongs to the staphylococcal tandem lipoprotein family.</text>
</comment>
<comment type="sequence caution" evidence="2">
    <conflict type="erroneous initiation">
        <sequence resource="EMBL-CDS" id="ABD21622"/>
    </conflict>
</comment>
<dbReference type="EMBL" id="CP000255">
    <property type="protein sequence ID" value="ABD21622.1"/>
    <property type="status" value="ALT_INIT"/>
    <property type="molecule type" value="Genomic_DNA"/>
</dbReference>
<dbReference type="SMR" id="Q2FJJ8"/>
<dbReference type="KEGG" id="saa:SAUSA300_0417"/>
<dbReference type="HOGENOM" id="CLU_071589_0_1_9"/>
<dbReference type="OMA" id="IWTIYTD"/>
<dbReference type="Proteomes" id="UP000001939">
    <property type="component" value="Chromosome"/>
</dbReference>
<dbReference type="GO" id="GO:0005886">
    <property type="term" value="C:plasma membrane"/>
    <property type="evidence" value="ECO:0007669"/>
    <property type="project" value="UniProtKB-SubCell"/>
</dbReference>
<dbReference type="Gene3D" id="2.50.20.40">
    <property type="match status" value="1"/>
</dbReference>
<dbReference type="InterPro" id="IPR007595">
    <property type="entry name" value="Csa"/>
</dbReference>
<dbReference type="InterPro" id="IPR038641">
    <property type="entry name" value="Csa_sf"/>
</dbReference>
<dbReference type="NCBIfam" id="TIGR01742">
    <property type="entry name" value="SA_tandem_lipo"/>
    <property type="match status" value="1"/>
</dbReference>
<dbReference type="Pfam" id="PF04507">
    <property type="entry name" value="DUF576"/>
    <property type="match status" value="1"/>
</dbReference>
<dbReference type="PROSITE" id="PS51257">
    <property type="entry name" value="PROKAR_LIPOPROTEIN"/>
    <property type="match status" value="1"/>
</dbReference>
<gene>
    <name type="ordered locus">SAUSA300_0417</name>
</gene>
<name>Y417_STAA3</name>
<accession>Q2FJJ8</accession>
<protein>
    <recommendedName>
        <fullName>Uncharacterized lipoprotein SAUSA300_0417</fullName>
    </recommendedName>
</protein>
<evidence type="ECO:0000255" key="1">
    <source>
        <dbReference type="PROSITE-ProRule" id="PRU00303"/>
    </source>
</evidence>
<evidence type="ECO:0000305" key="2"/>
<keyword id="KW-1003">Cell membrane</keyword>
<keyword id="KW-0449">Lipoprotein</keyword>
<keyword id="KW-0472">Membrane</keyword>
<keyword id="KW-0564">Palmitate</keyword>
<keyword id="KW-0732">Signal</keyword>